<name>ARGJ_ASPFN</name>
<comment type="function">
    <text evidence="1">Catalyzes two activities which are involved in the cyclic version of arginine biosynthesis: the synthesis of acetylglutamate from glutamate and acetyl-CoA, and of ornithine by transacetylation between acetylornithine and glutamate.</text>
</comment>
<comment type="catalytic activity">
    <reaction evidence="1">
        <text>N(2)-acetyl-L-ornithine + L-glutamate = N-acetyl-L-glutamate + L-ornithine</text>
        <dbReference type="Rhea" id="RHEA:15349"/>
        <dbReference type="ChEBI" id="CHEBI:29985"/>
        <dbReference type="ChEBI" id="CHEBI:44337"/>
        <dbReference type="ChEBI" id="CHEBI:46911"/>
        <dbReference type="ChEBI" id="CHEBI:57805"/>
        <dbReference type="EC" id="2.3.1.35"/>
    </reaction>
</comment>
<comment type="catalytic activity">
    <reaction evidence="1">
        <text>L-glutamate + acetyl-CoA = N-acetyl-L-glutamate + CoA + H(+)</text>
        <dbReference type="Rhea" id="RHEA:24292"/>
        <dbReference type="ChEBI" id="CHEBI:15378"/>
        <dbReference type="ChEBI" id="CHEBI:29985"/>
        <dbReference type="ChEBI" id="CHEBI:44337"/>
        <dbReference type="ChEBI" id="CHEBI:57287"/>
        <dbReference type="ChEBI" id="CHEBI:57288"/>
        <dbReference type="EC" id="2.3.1.1"/>
    </reaction>
</comment>
<comment type="pathway">
    <text evidence="1">Amino-acid biosynthesis; L-arginine biosynthesis; L-ornithine and N-acetyl-L-glutamate from L-glutamate and N(2)-acetyl-L-ornithine (cyclic): step 1/1.</text>
</comment>
<comment type="pathway">
    <text evidence="1">Amino-acid biosynthesis; L-arginine biosynthesis; N(2)-acetyl-L-ornithine from L-glutamate: step 1/4.</text>
</comment>
<comment type="subunit">
    <text evidence="1">Heterodimer of an alpha and a beta chain.</text>
</comment>
<comment type="subcellular location">
    <subcellularLocation>
        <location evidence="1">Mitochondrion matrix</location>
    </subcellularLocation>
</comment>
<comment type="PTM">
    <text evidence="1">The alpha and beta chains are autoproteolytically processed from a single precursor protein within the mitochondrion.</text>
</comment>
<comment type="miscellaneous">
    <text evidence="1">This protein may be expected to contain an N-terminal transit peptide but none has been predicted.</text>
</comment>
<comment type="similarity">
    <text evidence="1">Belongs to the ArgJ family.</text>
</comment>
<evidence type="ECO:0000255" key="1">
    <source>
        <dbReference type="HAMAP-Rule" id="MF_03124"/>
    </source>
</evidence>
<accession>B8NEJ3</accession>
<gene>
    <name type="ORF">AFLA_061910</name>
</gene>
<proteinExistence type="inferred from homology"/>
<dbReference type="EC" id="2.3.1.35" evidence="1"/>
<dbReference type="EC" id="2.3.1.1" evidence="1"/>
<dbReference type="EMBL" id="EQ963477">
    <property type="protein sequence ID" value="EED51928.1"/>
    <property type="molecule type" value="Genomic_DNA"/>
</dbReference>
<dbReference type="RefSeq" id="XP_002378935.1">
    <property type="nucleotide sequence ID" value="XM_002378894.1"/>
</dbReference>
<dbReference type="SMR" id="B8NEJ3"/>
<dbReference type="STRING" id="332952.B8NEJ3"/>
<dbReference type="MEROPS" id="T05.001"/>
<dbReference type="EnsemblFungi" id="EED51928">
    <property type="protein sequence ID" value="EED51928"/>
    <property type="gene ID" value="AFLA_061910"/>
</dbReference>
<dbReference type="VEuPathDB" id="FungiDB:AFLA_005245"/>
<dbReference type="eggNOG" id="KOG2786">
    <property type="taxonomic scope" value="Eukaryota"/>
</dbReference>
<dbReference type="HOGENOM" id="CLU_027172_1_0_1"/>
<dbReference type="OMA" id="WGRIVMA"/>
<dbReference type="UniPathway" id="UPA00068">
    <property type="reaction ID" value="UER00106"/>
</dbReference>
<dbReference type="UniPathway" id="UPA00068">
    <property type="reaction ID" value="UER00111"/>
</dbReference>
<dbReference type="GO" id="GO:0005759">
    <property type="term" value="C:mitochondrial matrix"/>
    <property type="evidence" value="ECO:0007669"/>
    <property type="project" value="UniProtKB-SubCell"/>
</dbReference>
<dbReference type="GO" id="GO:0004358">
    <property type="term" value="F:glutamate N-acetyltransferase activity"/>
    <property type="evidence" value="ECO:0007669"/>
    <property type="project" value="UniProtKB-UniRule"/>
</dbReference>
<dbReference type="GO" id="GO:0004042">
    <property type="term" value="F:L-glutamate N-acetyltransferase activity"/>
    <property type="evidence" value="ECO:0007669"/>
    <property type="project" value="UniProtKB-UniRule"/>
</dbReference>
<dbReference type="GO" id="GO:0006526">
    <property type="term" value="P:L-arginine biosynthetic process"/>
    <property type="evidence" value="ECO:0007669"/>
    <property type="project" value="UniProtKB-UniRule"/>
</dbReference>
<dbReference type="GO" id="GO:0006592">
    <property type="term" value="P:ornithine biosynthetic process"/>
    <property type="evidence" value="ECO:0007669"/>
    <property type="project" value="EnsemblFungi"/>
</dbReference>
<dbReference type="CDD" id="cd02152">
    <property type="entry name" value="OAT"/>
    <property type="match status" value="1"/>
</dbReference>
<dbReference type="FunFam" id="3.10.20.340:FF:000002">
    <property type="entry name" value="Arginine biosynthesis bifunctional protein ArgJ, mitochondrial"/>
    <property type="match status" value="1"/>
</dbReference>
<dbReference type="FunFam" id="3.30.2330.10:FF:000001">
    <property type="entry name" value="Arginine biosynthesis bifunctional protein ArgJ, mitochondrial"/>
    <property type="match status" value="1"/>
</dbReference>
<dbReference type="FunFam" id="3.60.70.12:FF:000002">
    <property type="entry name" value="Arginine biosynthesis bifunctional protein ArgJ, mitochondrial"/>
    <property type="match status" value="1"/>
</dbReference>
<dbReference type="Gene3D" id="3.30.2330.10">
    <property type="entry name" value="arginine biosynthesis bifunctional protein suprefamily"/>
    <property type="match status" value="1"/>
</dbReference>
<dbReference type="Gene3D" id="3.10.20.340">
    <property type="entry name" value="ArgJ beta chain, C-terminal domain"/>
    <property type="match status" value="1"/>
</dbReference>
<dbReference type="Gene3D" id="3.60.70.12">
    <property type="entry name" value="L-amino peptidase D-ALA esterase/amidase"/>
    <property type="match status" value="1"/>
</dbReference>
<dbReference type="HAMAP" id="MF_01106">
    <property type="entry name" value="ArgJ"/>
    <property type="match status" value="1"/>
</dbReference>
<dbReference type="InterPro" id="IPR002813">
    <property type="entry name" value="Arg_biosynth_ArgJ"/>
</dbReference>
<dbReference type="InterPro" id="IPR016117">
    <property type="entry name" value="ArgJ-like_dom_sf"/>
</dbReference>
<dbReference type="InterPro" id="IPR042195">
    <property type="entry name" value="ArgJ_beta_C"/>
</dbReference>
<dbReference type="NCBIfam" id="TIGR00120">
    <property type="entry name" value="ArgJ"/>
    <property type="match status" value="1"/>
</dbReference>
<dbReference type="NCBIfam" id="NF003802">
    <property type="entry name" value="PRK05388.1"/>
    <property type="match status" value="1"/>
</dbReference>
<dbReference type="PANTHER" id="PTHR23100">
    <property type="entry name" value="ARGININE BIOSYNTHESIS BIFUNCTIONAL PROTEIN ARGJ"/>
    <property type="match status" value="1"/>
</dbReference>
<dbReference type="PANTHER" id="PTHR23100:SF0">
    <property type="entry name" value="ARGININE BIOSYNTHESIS BIFUNCTIONAL PROTEIN ARGJ, MITOCHONDRIAL"/>
    <property type="match status" value="1"/>
</dbReference>
<dbReference type="Pfam" id="PF01960">
    <property type="entry name" value="ArgJ"/>
    <property type="match status" value="1"/>
</dbReference>
<dbReference type="SUPFAM" id="SSF56266">
    <property type="entry name" value="DmpA/ArgJ-like"/>
    <property type="match status" value="1"/>
</dbReference>
<protein>
    <recommendedName>
        <fullName evidence="1">Arginine biosynthesis bifunctional protein ArgJ, mitochondrial</fullName>
    </recommendedName>
    <domain>
        <recommendedName>
            <fullName evidence="1">Glutamate N-acetyltransferase</fullName>
            <shortName evidence="1">GAT</shortName>
            <ecNumber evidence="1">2.3.1.35</ecNumber>
        </recommendedName>
        <alternativeName>
            <fullName evidence="1">Ornithine acetyltransferase</fullName>
            <shortName evidence="1">OATase</shortName>
        </alternativeName>
        <alternativeName>
            <fullName evidence="1">Ornithine transacetylase</fullName>
        </alternativeName>
    </domain>
    <domain>
        <recommendedName>
            <fullName evidence="1">Amino-acid acetyltransferase</fullName>
            <ecNumber evidence="1">2.3.1.1</ecNumber>
        </recommendedName>
        <alternativeName>
            <fullName evidence="1">N-acetylglutamate synthase</fullName>
            <shortName evidence="1">AGS</shortName>
        </alternativeName>
    </domain>
    <component>
        <recommendedName>
            <fullName evidence="1">Arginine biosynthesis bifunctional protein ArgJ alpha chain</fullName>
        </recommendedName>
    </component>
    <component>
        <recommendedName>
            <fullName evidence="1">Arginine biosynthesis bifunctional protein ArgJ beta chain</fullName>
        </recommendedName>
    </component>
</protein>
<sequence length="466" mass="48922">MASPAQPAATMAAFARMVKGQVRSYSAPVDMAIPASKRKFIPSSGSYPKGFVVSGTHVGVKASNTKFPDLALISSETPCSAAAVFTTNKFQAAPVQVSRDIIKTRQGQGIRSVVINSGCANAVTGKGGLEDAVSMGKKVDECDGLNEPSTLVMSTGVIGQRLPISKILKKVPVAHANLSSTHDAWLTTARAICTTDTFPKLLSRTFTLPSSPGRTYSLAGMTKGAGMIHPNMATLLGVLCTDAPIEPSALQSLLKHSVNRSFNSISVDGDTSTNDTIAILANGAAGGAPISSSSSDDYAAMQDILTSFAQSLSQLVVRDGEGATKFVTVRVQNSPDYESGRLIASTIARSPLVKTALYGKDANWGRILCAIGYTQGVAPGTVVPEHTSVSFKPVDGSPVLNLLVNGEPEQVDEERASVILQEEDLEIVVDLGGGEKGEQGLGGEEAVYWFCDFSHEYVTINGDYRT</sequence>
<reference key="1">
    <citation type="journal article" date="2015" name="Genome Announc.">
        <title>Genome sequence of Aspergillus flavus NRRL 3357, a strain that causes aflatoxin contamination of food and feed.</title>
        <authorList>
            <person name="Nierman W.C."/>
            <person name="Yu J."/>
            <person name="Fedorova-Abrams N.D."/>
            <person name="Losada L."/>
            <person name="Cleveland T.E."/>
            <person name="Bhatnagar D."/>
            <person name="Bennett J.W."/>
            <person name="Dean R."/>
            <person name="Payne G.A."/>
        </authorList>
    </citation>
    <scope>NUCLEOTIDE SEQUENCE [LARGE SCALE GENOMIC DNA]</scope>
    <source>
        <strain>ATCC 200026 / FGSC A1120 / IAM 13836 / NRRL 3357 / JCM 12722 / SRRC 167</strain>
    </source>
</reference>
<keyword id="KW-0012">Acyltransferase</keyword>
<keyword id="KW-0028">Amino-acid biosynthesis</keyword>
<keyword id="KW-0055">Arginine biosynthesis</keyword>
<keyword id="KW-0068">Autocatalytic cleavage</keyword>
<keyword id="KW-0496">Mitochondrion</keyword>
<keyword id="KW-0511">Multifunctional enzyme</keyword>
<keyword id="KW-0808">Transferase</keyword>
<organism>
    <name type="scientific">Aspergillus flavus (strain ATCC 200026 / FGSC A1120 / IAM 13836 / NRRL 3357 / JCM 12722 / SRRC 167)</name>
    <dbReference type="NCBI Taxonomy" id="332952"/>
    <lineage>
        <taxon>Eukaryota</taxon>
        <taxon>Fungi</taxon>
        <taxon>Dikarya</taxon>
        <taxon>Ascomycota</taxon>
        <taxon>Pezizomycotina</taxon>
        <taxon>Eurotiomycetes</taxon>
        <taxon>Eurotiomycetidae</taxon>
        <taxon>Eurotiales</taxon>
        <taxon>Aspergillaceae</taxon>
        <taxon>Aspergillus</taxon>
        <taxon>Aspergillus subgen. Circumdati</taxon>
    </lineage>
</organism>
<feature type="chain" id="PRO_0000398014" description="Arginine biosynthesis bifunctional protein ArgJ alpha chain" evidence="1">
    <location>
        <begin position="1"/>
        <end position="233"/>
    </location>
</feature>
<feature type="chain" id="PRO_0000398015" description="Arginine biosynthesis bifunctional protein ArgJ beta chain" evidence="1">
    <location>
        <begin position="234"/>
        <end position="466"/>
    </location>
</feature>
<feature type="active site" description="Nucleophile" evidence="1">
    <location>
        <position position="234"/>
    </location>
</feature>
<feature type="binding site" evidence="1">
    <location>
        <position position="194"/>
    </location>
    <ligand>
        <name>substrate</name>
    </ligand>
</feature>
<feature type="binding site" evidence="1">
    <location>
        <position position="223"/>
    </location>
    <ligand>
        <name>substrate</name>
    </ligand>
</feature>
<feature type="binding site" evidence="1">
    <location>
        <position position="234"/>
    </location>
    <ligand>
        <name>substrate</name>
    </ligand>
</feature>
<feature type="binding site" evidence="1">
    <location>
        <position position="321"/>
    </location>
    <ligand>
        <name>substrate</name>
    </ligand>
</feature>
<feature type="binding site" evidence="1">
    <location>
        <position position="461"/>
    </location>
    <ligand>
        <name>substrate</name>
    </ligand>
</feature>
<feature type="binding site" evidence="1">
    <location>
        <position position="466"/>
    </location>
    <ligand>
        <name>substrate</name>
    </ligand>
</feature>
<feature type="site" description="Involved in the stabilization of negative charge on the oxyanion by the formation of the oxyanion hole" evidence="1">
    <location>
        <position position="155"/>
    </location>
</feature>
<feature type="site" description="Involved in the stabilization of negative charge on the oxyanion by the formation of the oxyanion hole" evidence="1">
    <location>
        <position position="156"/>
    </location>
</feature>
<feature type="site" description="Cleavage; by autolysis" evidence="1">
    <location>
        <begin position="233"/>
        <end position="234"/>
    </location>
</feature>